<accession>O54912</accession>
<keyword id="KW-1003">Cell membrane</keyword>
<keyword id="KW-0325">Glycoprotein</keyword>
<keyword id="KW-0407">Ion channel</keyword>
<keyword id="KW-0406">Ion transport</keyword>
<keyword id="KW-0472">Membrane</keyword>
<keyword id="KW-0630">Potassium</keyword>
<keyword id="KW-0631">Potassium channel</keyword>
<keyword id="KW-0633">Potassium transport</keyword>
<keyword id="KW-1185">Reference proteome</keyword>
<keyword id="KW-0915">Sodium</keyword>
<keyword id="KW-0894">Sodium channel</keyword>
<keyword id="KW-0739">Sodium transport</keyword>
<keyword id="KW-0812">Transmembrane</keyword>
<keyword id="KW-1133">Transmembrane helix</keyword>
<keyword id="KW-0813">Transport</keyword>
<proteinExistence type="evidence at protein level"/>
<protein>
    <recommendedName>
        <fullName>Potassium channel subfamily K member 3</fullName>
    </recommendedName>
    <alternativeName>
        <fullName>Acid-sensitive potassium channel protein TASK-1</fullName>
    </alternativeName>
    <alternativeName>
        <fullName>TWIK-related acid-sensitive K(+) channel 1</fullName>
    </alternativeName>
    <alternativeName>
        <fullName>Two pore potassium channel KT3.1</fullName>
        <shortName>Two pore K(+) channel KT3.1</shortName>
    </alternativeName>
</protein>
<comment type="function">
    <text evidence="1 2 4 5 6 7">K(+) channel that conducts voltage-dependent outward rectifying currents upon membrane depolarization. Voltage sensing is coupled to K(+) electrochemical gradient in an 'ion flux gating' mode where outward but not inward ion flow opens the gate (PubMed:10725353, PubMed:15282272, PubMed:9437008). Changes ion selectivity and becomes permeable to Na(+) ions in response to extracellular acidification. Protonation of the pH sensor His-98 stabilizes C-type inactivation conformation likely converting the channel from outward K(+)-conducting, to inward Na(+)-conducting to nonconductive state (By similarity). Homo- and heterodimerizes to form functional channels with distinct regulatory and gating properties (By similarity) (PubMed:15282272). Allows K(+) currents with fast-gating kinetics important for the repolarization and hyperpolarization phases of action potentials (By similarity). In cerebellar granule cells, heteromeric KCNK3:KCNK9 channel may hyperpolarize the resting membrane potential to limit intrinsic neuronal excitability, but once the action potential threshold is reached, it may support high-frequency action potential firing and increased neuronal excitability (By similarity) (PubMed:14678492). Dispensable for central chemosensory respiration i.e. breathing controlled by brainstem CO2/pH, it rather conducts pH-sensitive currents and controls the firing rate of serotonergic raphe neurons involved in potentiation of the respiratory chemoreflex. Additionally, imparts chemosensitivity to type 1 cells in carotid bodies which respond to a decrease in arterial oxygen pressure or an increase in carbon dioxide pressure or pH to initiate adaptive changes in pulmonary ventilation (By similarity). In adrenal gland, contributes to the maintenance of a hyperpolarized resting membrane potential of aldosterone-producing cells at zona glomerulosa and limits aldosterone release as part of a regulatory mechanism that controls arterial blood pressure and electrolyte homeostasis (By similarity). In brown adipocytes, mediates K(+) efflux that counteracts norepinephrine-induced membrane depolarization, limits Ca(2+) efflux and downstream cAMP and PKA signaling, ultimately attenuating lipid oxidation and adaptive thermogenesis (By similarity).</text>
</comment>
<comment type="catalytic activity">
    <reaction evidence="4 5 6 7">
        <text>K(+)(in) = K(+)(out)</text>
        <dbReference type="Rhea" id="RHEA:29463"/>
        <dbReference type="ChEBI" id="CHEBI:29103"/>
    </reaction>
</comment>
<comment type="catalytic activity">
    <reaction evidence="1">
        <text>Na(+)(in) = Na(+)(out)</text>
        <dbReference type="Rhea" id="RHEA:34963"/>
        <dbReference type="ChEBI" id="CHEBI:29101"/>
    </reaction>
</comment>
<comment type="activity regulation">
    <text evidence="4 5 6 7">Inhibited by extracellular acidification, muscarinic signaling, divalent metal cations Zn(2+) and Ba(2+), isoflurane, bupivacaine and phenytoin. Activated by protein kinase A. Ruthenium red resistant.</text>
</comment>
<comment type="subunit">
    <text evidence="1 6">Homodimer. Heterodimer with KCNK1 (By similarity). Heterodimer with KCNK9 (PubMed:15282272).</text>
</comment>
<comment type="subcellular location">
    <subcellularLocation>
        <location evidence="10">Cell membrane</location>
        <topology evidence="3">Multi-pass membrane protein</topology>
    </subcellularLocation>
</comment>
<comment type="tissue specificity">
    <text evidence="4 7">Strongest expression in heart. Moderate expression in lung and brain. Low levels in liver, kidney and skeletal muscle. Expressed in cerebellar granule cells (at protein level).</text>
</comment>
<comment type="domain">
    <text evidence="1">Each subunit contributes two pore-forming domains 1 and 2 which assemble to form a single pore with M2 and M4 transmembrane helices lining the central cavity and M1 and M3 facing the lipid bilayer. The transmembrane helices are bridged by the selectivity filters 1 and 2 carrying a signature sequence TxTTxG(Y/F)G(D/H) that coordinate the permeant ions. Up to four ions can simultaneously occupy the selectivity filter and at least two elementary charges must translocate across the filter to convert it into the open conformation.</text>
</comment>
<comment type="domain">
    <text evidence="1">The X-gate is positioned at the distal ends of M4 transmembrane helices forming a two-turn-helical structure with the methyl group of Thr-248 closing the ion conduction pathway.</text>
</comment>
<comment type="similarity">
    <text evidence="9">Belongs to the two pore domain potassium channel (TC 1.A.1.8) family.</text>
</comment>
<organism>
    <name type="scientific">Rattus norvegicus</name>
    <name type="common">Rat</name>
    <dbReference type="NCBI Taxonomy" id="10116"/>
    <lineage>
        <taxon>Eukaryota</taxon>
        <taxon>Metazoa</taxon>
        <taxon>Chordata</taxon>
        <taxon>Craniata</taxon>
        <taxon>Vertebrata</taxon>
        <taxon>Euteleostomi</taxon>
        <taxon>Mammalia</taxon>
        <taxon>Eutheria</taxon>
        <taxon>Euarchontoglires</taxon>
        <taxon>Glires</taxon>
        <taxon>Rodentia</taxon>
        <taxon>Myomorpha</taxon>
        <taxon>Muroidea</taxon>
        <taxon>Muridae</taxon>
        <taxon>Murinae</taxon>
        <taxon>Rattus</taxon>
    </lineage>
</organism>
<dbReference type="EMBL" id="AF031384">
    <property type="protein sequence ID" value="AAC39952.1"/>
    <property type="molecule type" value="mRNA"/>
</dbReference>
<dbReference type="RefSeq" id="NP_203694.1">
    <property type="nucleotide sequence ID" value="NM_033376.3"/>
</dbReference>
<dbReference type="SMR" id="O54912"/>
<dbReference type="CORUM" id="O54912"/>
<dbReference type="DIP" id="DIP-61121N"/>
<dbReference type="FunCoup" id="O54912">
    <property type="interactions" value="195"/>
</dbReference>
<dbReference type="IntAct" id="O54912">
    <property type="interactions" value="2"/>
</dbReference>
<dbReference type="STRING" id="10116.ENSRNOP00000013107"/>
<dbReference type="BindingDB" id="O54912"/>
<dbReference type="ChEMBL" id="CHEMBL4294"/>
<dbReference type="DrugCentral" id="O54912"/>
<dbReference type="GuidetoPHARMACOLOGY" id="515"/>
<dbReference type="GlyCosmos" id="O54912">
    <property type="glycosylation" value="1 site, No reported glycans"/>
</dbReference>
<dbReference type="GlyGen" id="O54912">
    <property type="glycosylation" value="1 site"/>
</dbReference>
<dbReference type="PhosphoSitePlus" id="O54912"/>
<dbReference type="PaxDb" id="10116-ENSRNOP00000013107"/>
<dbReference type="ABCD" id="O54912">
    <property type="antibodies" value="1 sequenced antibody"/>
</dbReference>
<dbReference type="Ensembl" id="ENSRNOT00000108628.1">
    <property type="protein sequence ID" value="ENSRNOP00000079208.1"/>
    <property type="gene ID" value="ENSRNOG00000009790.6"/>
</dbReference>
<dbReference type="GeneID" id="29553"/>
<dbReference type="KEGG" id="rno:29553"/>
<dbReference type="AGR" id="RGD:61997"/>
<dbReference type="CTD" id="3777"/>
<dbReference type="RGD" id="61997">
    <property type="gene designation" value="Kcnk3"/>
</dbReference>
<dbReference type="eggNOG" id="KOG4404">
    <property type="taxonomic scope" value="Eukaryota"/>
</dbReference>
<dbReference type="GeneTree" id="ENSGT00940000158248"/>
<dbReference type="HOGENOM" id="CLU_022504_4_0_1"/>
<dbReference type="InParanoid" id="O54912"/>
<dbReference type="OMA" id="QWNFAGS"/>
<dbReference type="OrthoDB" id="297496at2759"/>
<dbReference type="PhylomeDB" id="O54912"/>
<dbReference type="TreeFam" id="TF313947"/>
<dbReference type="Reactome" id="R-RNO-1299316">
    <property type="pathway name" value="TWIK-releated acid-sensitive K+ channel (TASK)"/>
</dbReference>
<dbReference type="Reactome" id="R-RNO-5576886">
    <property type="pathway name" value="Phase 4 - resting membrane potential"/>
</dbReference>
<dbReference type="PRO" id="PR:O54912"/>
<dbReference type="Proteomes" id="UP000002494">
    <property type="component" value="Chromosome 6"/>
</dbReference>
<dbReference type="Bgee" id="ENSRNOG00000009790">
    <property type="expression patterns" value="Expressed in heart and 17 other cell types or tissues"/>
</dbReference>
<dbReference type="ExpressionAtlas" id="O54912">
    <property type="expression patterns" value="baseline and differential"/>
</dbReference>
<dbReference type="GO" id="GO:0005886">
    <property type="term" value="C:plasma membrane"/>
    <property type="evidence" value="ECO:0000266"/>
    <property type="project" value="RGD"/>
</dbReference>
<dbReference type="GO" id="GO:0005216">
    <property type="term" value="F:monoatomic ion channel activity"/>
    <property type="evidence" value="ECO:0000266"/>
    <property type="project" value="RGD"/>
</dbReference>
<dbReference type="GO" id="GO:0005252">
    <property type="term" value="F:open rectifier potassium channel activity"/>
    <property type="evidence" value="ECO:0000314"/>
    <property type="project" value="RGD"/>
</dbReference>
<dbReference type="GO" id="GO:0015271">
    <property type="term" value="F:outward rectifier potassium channel activity"/>
    <property type="evidence" value="ECO:0000250"/>
    <property type="project" value="UniProtKB"/>
</dbReference>
<dbReference type="GO" id="GO:0022841">
    <property type="term" value="F:potassium ion leak channel activity"/>
    <property type="evidence" value="ECO:0000250"/>
    <property type="project" value="UniProtKB"/>
</dbReference>
<dbReference type="GO" id="GO:0046982">
    <property type="term" value="F:protein heterodimerization activity"/>
    <property type="evidence" value="ECO:0000314"/>
    <property type="project" value="UniProtKB"/>
</dbReference>
<dbReference type="GO" id="GO:0044548">
    <property type="term" value="F:S100 protein binding"/>
    <property type="evidence" value="ECO:0000266"/>
    <property type="project" value="RGD"/>
</dbReference>
<dbReference type="GO" id="GO:0005272">
    <property type="term" value="F:sodium channel activity"/>
    <property type="evidence" value="ECO:0000266"/>
    <property type="project" value="RGD"/>
</dbReference>
<dbReference type="GO" id="GO:0071468">
    <property type="term" value="P:cellular response to acidic pH"/>
    <property type="evidence" value="ECO:0000266"/>
    <property type="project" value="RGD"/>
</dbReference>
<dbReference type="GO" id="GO:0071456">
    <property type="term" value="P:cellular response to hypoxia"/>
    <property type="evidence" value="ECO:0000315"/>
    <property type="project" value="RGD"/>
</dbReference>
<dbReference type="GO" id="GO:0071294">
    <property type="term" value="P:cellular response to zinc ion"/>
    <property type="evidence" value="ECO:0000270"/>
    <property type="project" value="RGD"/>
</dbReference>
<dbReference type="GO" id="GO:0090102">
    <property type="term" value="P:cochlea development"/>
    <property type="evidence" value="ECO:0000270"/>
    <property type="project" value="RGD"/>
</dbReference>
<dbReference type="GO" id="GO:0003029">
    <property type="term" value="P:detection of hypoxic conditions in blood by carotid body chemoreceptor signaling"/>
    <property type="evidence" value="ECO:0000250"/>
    <property type="project" value="UniProtKB"/>
</dbReference>
<dbReference type="GO" id="GO:0034220">
    <property type="term" value="P:monoatomic ion transmembrane transport"/>
    <property type="evidence" value="ECO:0000266"/>
    <property type="project" value="RGD"/>
</dbReference>
<dbReference type="GO" id="GO:0051481">
    <property type="term" value="P:negative regulation of cytosolic calcium ion concentration"/>
    <property type="evidence" value="ECO:0000315"/>
    <property type="project" value="RGD"/>
</dbReference>
<dbReference type="GO" id="GO:0071805">
    <property type="term" value="P:potassium ion transmembrane transport"/>
    <property type="evidence" value="ECO:0000318"/>
    <property type="project" value="GO_Central"/>
</dbReference>
<dbReference type="GO" id="GO:0006813">
    <property type="term" value="P:potassium ion transport"/>
    <property type="evidence" value="ECO:0000314"/>
    <property type="project" value="RGD"/>
</dbReference>
<dbReference type="GO" id="GO:0099605">
    <property type="term" value="P:regulation of action potential firing rate"/>
    <property type="evidence" value="ECO:0000266"/>
    <property type="project" value="RGD"/>
</dbReference>
<dbReference type="GO" id="GO:0060075">
    <property type="term" value="P:regulation of resting membrane potential"/>
    <property type="evidence" value="ECO:0000315"/>
    <property type="project" value="RGD"/>
</dbReference>
<dbReference type="GO" id="GO:0009410">
    <property type="term" value="P:response to xenobiotic stimulus"/>
    <property type="evidence" value="ECO:0000315"/>
    <property type="project" value="RGD"/>
</dbReference>
<dbReference type="FunFam" id="1.10.287.70:FF:000057">
    <property type="entry name" value="Potassium channel subfamily K member"/>
    <property type="match status" value="1"/>
</dbReference>
<dbReference type="Gene3D" id="1.10.287.70">
    <property type="match status" value="1"/>
</dbReference>
<dbReference type="InterPro" id="IPR003280">
    <property type="entry name" value="2pore_dom_K_chnl"/>
</dbReference>
<dbReference type="InterPro" id="IPR003092">
    <property type="entry name" value="2pore_dom_K_chnl_TASK"/>
</dbReference>
<dbReference type="InterPro" id="IPR013099">
    <property type="entry name" value="K_chnl_dom"/>
</dbReference>
<dbReference type="InterPro" id="IPR005406">
    <property type="entry name" value="KCNK3"/>
</dbReference>
<dbReference type="PANTHER" id="PTHR11003:SF138">
    <property type="entry name" value="POTASSIUM CHANNEL SUBFAMILY K MEMBER 3"/>
    <property type="match status" value="1"/>
</dbReference>
<dbReference type="PANTHER" id="PTHR11003">
    <property type="entry name" value="POTASSIUM CHANNEL, SUBFAMILY K"/>
    <property type="match status" value="1"/>
</dbReference>
<dbReference type="Pfam" id="PF07885">
    <property type="entry name" value="Ion_trans_2"/>
    <property type="match status" value="2"/>
</dbReference>
<dbReference type="PIRSF" id="PIRSF038061">
    <property type="entry name" value="K_channel_subfamily_K_type"/>
    <property type="match status" value="1"/>
</dbReference>
<dbReference type="PRINTS" id="PR01333">
    <property type="entry name" value="2POREKCHANEL"/>
</dbReference>
<dbReference type="PRINTS" id="PR01584">
    <property type="entry name" value="TASK1CHANNEL"/>
</dbReference>
<dbReference type="PRINTS" id="PR01095">
    <property type="entry name" value="TASKCHANNEL"/>
</dbReference>
<dbReference type="SUPFAM" id="SSF81324">
    <property type="entry name" value="Voltage-gated potassium channels"/>
    <property type="match status" value="2"/>
</dbReference>
<feature type="chain" id="PRO_0000101746" description="Potassium channel subfamily K member 3">
    <location>
        <begin position="1"/>
        <end position="411"/>
    </location>
</feature>
<feature type="topological domain" description="Cytoplasmic" evidence="3">
    <location>
        <begin position="1"/>
        <end position="8"/>
    </location>
</feature>
<feature type="transmembrane region" description="Helical" evidence="3">
    <location>
        <begin position="9"/>
        <end position="29"/>
    </location>
</feature>
<feature type="intramembrane region" description="Pore-forming; Name=Pore-forming 1" evidence="3">
    <location>
        <begin position="78"/>
        <end position="101"/>
    </location>
</feature>
<feature type="transmembrane region" description="Helical" evidence="3">
    <location>
        <begin position="108"/>
        <end position="128"/>
    </location>
</feature>
<feature type="topological domain" description="Cytoplasmic" evidence="3">
    <location>
        <begin position="129"/>
        <end position="158"/>
    </location>
</feature>
<feature type="transmembrane region" description="Helical" evidence="3">
    <location>
        <begin position="159"/>
        <end position="179"/>
    </location>
</feature>
<feature type="intramembrane region" description="Pore-forming; Name=Pore-forming 2" evidence="3">
    <location>
        <begin position="184"/>
        <end position="207"/>
    </location>
</feature>
<feature type="transmembrane region" description="Helical" evidence="3">
    <location>
        <begin position="223"/>
        <end position="243"/>
    </location>
</feature>
<feature type="topological domain" description="Cytoplasmic" evidence="3">
    <location>
        <begin position="244"/>
        <end position="411"/>
    </location>
</feature>
<feature type="glycosylation site" description="N-linked (GlcNAc...) asparagine" evidence="3">
    <location>
        <position position="53"/>
    </location>
</feature>
<name>KCNK3_RAT</name>
<reference key="1">
    <citation type="journal article" date="1998" name="J. Neurosci.">
        <title>An open rectifier potassium channel with two pore domains in tandem cloned from rat cerebellum.</title>
        <authorList>
            <person name="Leonoudakis D."/>
            <person name="Gray A.T."/>
            <person name="Winegar B.D."/>
            <person name="Kindler C.H."/>
            <person name="Harada M."/>
            <person name="Taylor D.M."/>
            <person name="Chavez R.A."/>
            <person name="Forsayeth J.R."/>
            <person name="Yost C.S."/>
        </authorList>
    </citation>
    <scope>NUCLEOTIDE SEQUENCE [MRNA]</scope>
    <scope>TISSUE SPECIFICITY</scope>
    <source>
        <tissue>Cerebellum</tissue>
    </source>
</reference>
<reference key="2">
    <citation type="journal article" date="2000" name="Proc. Natl. Acad. Sci. U.S.A.">
        <title>A functional role for the two-pore domain potassium channel TASK-1 in cerebellar granule neurons.</title>
        <authorList>
            <person name="Millar J.A."/>
            <person name="Barratt L."/>
            <person name="Southan A.P."/>
            <person name="Page K.M."/>
            <person name="Fyffe R.E."/>
            <person name="Robertson B."/>
            <person name="Mathie A."/>
        </authorList>
    </citation>
    <scope>FUNCTION</scope>
    <scope>TRANSPORTER ACTIVITY</scope>
    <scope>ACTIVITY REGULATION</scope>
    <scope>SUBCELLULAR LOCATION</scope>
    <scope>TISSUE SPECIFICITY</scope>
</reference>
<reference key="3">
    <citation type="journal article" date="2004" name="J. Neurosci.">
        <title>Motoneurons express heteromeric TWIK-related acid-sensitive K+ (TASK) channels containing TASK-1 (KCNK3) and TASK-3 (KCNK9) subunits.</title>
        <authorList>
            <person name="Berg A.P."/>
            <person name="Talley E.M."/>
            <person name="Manger J.P."/>
            <person name="Bayliss D.A."/>
        </authorList>
    </citation>
    <scope>FUNCTION</scope>
    <scope>TRANSPORTER ACTIVITY</scope>
    <scope>ACTIVITY REGULATION</scope>
    <scope>INTERACTION WITH KCNK9</scope>
</reference>
<reference key="4">
    <citation type="journal article" date="2004" name="J. Physiol. (Lond.)">
        <title>Functional expression of TASK-1/TASK-3 heteromers in cerebellar granule cells.</title>
        <authorList>
            <person name="Kang D."/>
            <person name="Han J."/>
            <person name="Talley E.M."/>
            <person name="Bayliss D.A."/>
            <person name="Kim D."/>
        </authorList>
    </citation>
    <scope>FUNCTION</scope>
    <scope>TRANSPORTER ACTIVITY</scope>
    <scope>ACTIVITY REGULATION</scope>
</reference>
<sequence>MKRQNVRTLALIVCTFTYLLVGAAVFDALESEPEMIERQRLELRQLELRARYNLSEGGYEELERVVLRLKPHKAGVQWRFAGSFYFAITVITTIGYGHAAPSTDGGKVFCMFYALLGIPLTLVMFQSLGERINTFVRYLLHRAKRGLGMRHAEVSMANMVLIGFVSCISTLCIGAAAFSYYERWTFFQAYYYCFITLTTIGFGDYVALQKDQALQTQPQYVAFSFVYILTGLTVIGAFLNLVVLRFMTMNAEDEKRDAEHRALLTHNGQAGGLGGLSCLSGSLGDGVRPRDPVTCAAAAGGMGVGVGVGGSGFRNVYAEMLHFQSMCSCLWYKSREKLQYSIPMIIPRDLSTSDTCVEHSHSSPGGGGRYSDTPSHPCLCSGTQRSAISSVSTGLHSLATFRGLMKRRSSV</sequence>
<evidence type="ECO:0000250" key="1">
    <source>
        <dbReference type="UniProtKB" id="O14649"/>
    </source>
</evidence>
<evidence type="ECO:0000250" key="2">
    <source>
        <dbReference type="UniProtKB" id="O35111"/>
    </source>
</evidence>
<evidence type="ECO:0000255" key="3"/>
<evidence type="ECO:0000269" key="4">
    <source>
    </source>
</evidence>
<evidence type="ECO:0000269" key="5">
    <source>
    </source>
</evidence>
<evidence type="ECO:0000269" key="6">
    <source>
    </source>
</evidence>
<evidence type="ECO:0000269" key="7">
    <source>
    </source>
</evidence>
<evidence type="ECO:0000303" key="8">
    <source>
    </source>
</evidence>
<evidence type="ECO:0000305" key="9"/>
<evidence type="ECO:0000305" key="10">
    <source>
    </source>
</evidence>
<evidence type="ECO:0000312" key="11">
    <source>
        <dbReference type="RGD" id="61997"/>
    </source>
</evidence>
<gene>
    <name evidence="8 11" type="primary">Kcnk3</name>
    <name type="synonym">Task</name>
    <name evidence="8" type="synonym">Task1</name>
</gene>